<proteinExistence type="inferred from homology"/>
<comment type="function">
    <text evidence="1">Involved in the biosynthesis of the osmoprotectant glycine betaine. Catalyzes the irreversible oxidation of betaine aldehyde to the corresponding acid.</text>
</comment>
<comment type="catalytic activity">
    <reaction evidence="1">
        <text>betaine aldehyde + NAD(+) + H2O = glycine betaine + NADH + 2 H(+)</text>
        <dbReference type="Rhea" id="RHEA:15305"/>
        <dbReference type="ChEBI" id="CHEBI:15377"/>
        <dbReference type="ChEBI" id="CHEBI:15378"/>
        <dbReference type="ChEBI" id="CHEBI:15710"/>
        <dbReference type="ChEBI" id="CHEBI:17750"/>
        <dbReference type="ChEBI" id="CHEBI:57540"/>
        <dbReference type="ChEBI" id="CHEBI:57945"/>
        <dbReference type="EC" id="1.2.1.8"/>
    </reaction>
    <physiologicalReaction direction="left-to-right" evidence="1">
        <dbReference type="Rhea" id="RHEA:15306"/>
    </physiologicalReaction>
</comment>
<comment type="cofactor">
    <cofactor evidence="1">
        <name>K(+)</name>
        <dbReference type="ChEBI" id="CHEBI:29103"/>
    </cofactor>
    <text evidence="1">Binds 2 potassium ions per subunit.</text>
</comment>
<comment type="pathway">
    <text evidence="1">Amine and polyamine biosynthesis; betaine biosynthesis via choline pathway; betaine from betaine aldehyde: step 1/1.</text>
</comment>
<comment type="subunit">
    <text evidence="1">Dimer of dimers.</text>
</comment>
<comment type="similarity">
    <text evidence="1">Belongs to the aldehyde dehydrogenase family.</text>
</comment>
<reference key="1">
    <citation type="journal article" date="2004" name="Proc. Natl. Acad. Sci. U.S.A.">
        <title>Genomic plasticity of the causative agent of melioidosis, Burkholderia pseudomallei.</title>
        <authorList>
            <person name="Holden M.T.G."/>
            <person name="Titball R.W."/>
            <person name="Peacock S.J."/>
            <person name="Cerdeno-Tarraga A.-M."/>
            <person name="Atkins T."/>
            <person name="Crossman L.C."/>
            <person name="Pitt T."/>
            <person name="Churcher C."/>
            <person name="Mungall K.L."/>
            <person name="Bentley S.D."/>
            <person name="Sebaihia M."/>
            <person name="Thomson N.R."/>
            <person name="Bason N."/>
            <person name="Beacham I.R."/>
            <person name="Brooks K."/>
            <person name="Brown K.A."/>
            <person name="Brown N.F."/>
            <person name="Challis G.L."/>
            <person name="Cherevach I."/>
            <person name="Chillingworth T."/>
            <person name="Cronin A."/>
            <person name="Crossett B."/>
            <person name="Davis P."/>
            <person name="DeShazer D."/>
            <person name="Feltwell T."/>
            <person name="Fraser A."/>
            <person name="Hance Z."/>
            <person name="Hauser H."/>
            <person name="Holroyd S."/>
            <person name="Jagels K."/>
            <person name="Keith K.E."/>
            <person name="Maddison M."/>
            <person name="Moule S."/>
            <person name="Price C."/>
            <person name="Quail M.A."/>
            <person name="Rabbinowitsch E."/>
            <person name="Rutherford K."/>
            <person name="Sanders M."/>
            <person name="Simmonds M."/>
            <person name="Songsivilai S."/>
            <person name="Stevens K."/>
            <person name="Tumapa S."/>
            <person name="Vesaratchavest M."/>
            <person name="Whitehead S."/>
            <person name="Yeats C."/>
            <person name="Barrell B.G."/>
            <person name="Oyston P.C.F."/>
            <person name="Parkhill J."/>
        </authorList>
    </citation>
    <scope>NUCLEOTIDE SEQUENCE [LARGE SCALE GENOMIC DNA]</scope>
    <source>
        <strain>K96243</strain>
    </source>
</reference>
<accession>Q63KK8</accession>
<evidence type="ECO:0000255" key="1">
    <source>
        <dbReference type="HAMAP-Rule" id="MF_00804"/>
    </source>
</evidence>
<keyword id="KW-0479">Metal-binding</keyword>
<keyword id="KW-0520">NAD</keyword>
<keyword id="KW-0521">NADP</keyword>
<keyword id="KW-0558">Oxidation</keyword>
<keyword id="KW-0560">Oxidoreductase</keyword>
<keyword id="KW-0630">Potassium</keyword>
<keyword id="KW-1185">Reference proteome</keyword>
<organism>
    <name type="scientific">Burkholderia pseudomallei (strain K96243)</name>
    <dbReference type="NCBI Taxonomy" id="272560"/>
    <lineage>
        <taxon>Bacteria</taxon>
        <taxon>Pseudomonadati</taxon>
        <taxon>Pseudomonadota</taxon>
        <taxon>Betaproteobacteria</taxon>
        <taxon>Burkholderiales</taxon>
        <taxon>Burkholderiaceae</taxon>
        <taxon>Burkholderia</taxon>
        <taxon>pseudomallei group</taxon>
    </lineage>
</organism>
<name>BETB_BURPS</name>
<sequence length="489" mass="52211">MSVYGLQRLYIAGAHADATSGKTFDTFDPATGELLARVQQASADDVDRAVASAREGQREWAAMTAMQRSRILRRAVELLRERNDALAELEMRDTGKPIAETRAVDIVTGADVIEYYAGLATAIEGLQVPLRPESFVYTRREPLGVCAGIGAWNYPIQIACWKSAPALAAGNAMIFKPSEVTPLSALKLAEIYTEAGVPAGVFNVVQGDGSVGALLSAHPGIAKVSFTGGVETGKKVMSLAGASSLKEVTMELGGKSPLIVFDDADLDRAADIAVTANFFSAGQVCTNGTRVFVQQAVKDAFVERVLARVARIRVGKPSDPDTNFGPLASAAQLDKVLGYIDSGKAEGAKLLAGGARLVNDHFASGQYVAPTVFGDCRDDMRIVREEIFGPVMSILPFETEDEAIARANATDYGLAAGVVTENLSRAHRAIHRLEAGICWINTWGESPAEMPVGGYKQSGVGRENGITTLEHYTRIKSVQVELGRYQPVF</sequence>
<feature type="chain" id="PRO_0000056540" description="Betaine aldehyde dehydrogenase">
    <location>
        <begin position="1"/>
        <end position="489"/>
    </location>
</feature>
<feature type="active site" description="Charge relay system" evidence="1">
    <location>
        <position position="162"/>
    </location>
</feature>
<feature type="active site" description="Proton acceptor" evidence="1">
    <location>
        <position position="251"/>
    </location>
</feature>
<feature type="active site" description="Nucleophile" evidence="1">
    <location>
        <position position="285"/>
    </location>
</feature>
<feature type="active site" description="Charge relay system" evidence="1">
    <location>
        <position position="463"/>
    </location>
</feature>
<feature type="binding site" evidence="1">
    <location>
        <position position="26"/>
    </location>
    <ligand>
        <name>K(+)</name>
        <dbReference type="ChEBI" id="CHEBI:29103"/>
        <label>1</label>
    </ligand>
</feature>
<feature type="binding site" evidence="1">
    <location>
        <position position="93"/>
    </location>
    <ligand>
        <name>K(+)</name>
        <dbReference type="ChEBI" id="CHEBI:29103"/>
        <label>1</label>
    </ligand>
</feature>
<feature type="binding site" evidence="1">
    <location>
        <begin position="150"/>
        <end position="152"/>
    </location>
    <ligand>
        <name>NAD(+)</name>
        <dbReference type="ChEBI" id="CHEBI:57540"/>
    </ligand>
</feature>
<feature type="binding site" evidence="1">
    <location>
        <begin position="176"/>
        <end position="179"/>
    </location>
    <ligand>
        <name>NAD(+)</name>
        <dbReference type="ChEBI" id="CHEBI:57540"/>
    </ligand>
</feature>
<feature type="binding site" evidence="1">
    <location>
        <position position="180"/>
    </location>
    <ligand>
        <name>K(+)</name>
        <dbReference type="ChEBI" id="CHEBI:29103"/>
        <label>1</label>
    </ligand>
</feature>
<feature type="binding site" evidence="1">
    <location>
        <begin position="229"/>
        <end position="232"/>
    </location>
    <ligand>
        <name>NAD(+)</name>
        <dbReference type="ChEBI" id="CHEBI:57540"/>
    </ligand>
</feature>
<feature type="binding site" evidence="1">
    <location>
        <position position="245"/>
    </location>
    <ligand>
        <name>K(+)</name>
        <dbReference type="ChEBI" id="CHEBI:29103"/>
        <label>2</label>
    </ligand>
</feature>
<feature type="binding site" evidence="1">
    <location>
        <position position="253"/>
    </location>
    <ligand>
        <name>NAD(+)</name>
        <dbReference type="ChEBI" id="CHEBI:57540"/>
    </ligand>
</feature>
<feature type="binding site" description="covalent" evidence="1">
    <location>
        <position position="285"/>
    </location>
    <ligand>
        <name>NAD(+)</name>
        <dbReference type="ChEBI" id="CHEBI:57540"/>
    </ligand>
</feature>
<feature type="binding site" evidence="1">
    <location>
        <position position="386"/>
    </location>
    <ligand>
        <name>NAD(+)</name>
        <dbReference type="ChEBI" id="CHEBI:57540"/>
    </ligand>
</feature>
<feature type="binding site" evidence="1">
    <location>
        <position position="456"/>
    </location>
    <ligand>
        <name>K(+)</name>
        <dbReference type="ChEBI" id="CHEBI:29103"/>
        <label>2</label>
    </ligand>
</feature>
<feature type="binding site" evidence="1">
    <location>
        <position position="459"/>
    </location>
    <ligand>
        <name>K(+)</name>
        <dbReference type="ChEBI" id="CHEBI:29103"/>
        <label>2</label>
    </ligand>
</feature>
<feature type="site" description="Seems to be a necessary countercharge to the potassium cations" evidence="1">
    <location>
        <position position="247"/>
    </location>
</feature>
<feature type="modified residue" description="Cysteine sulfenic acid (-SOH)" evidence="1">
    <location>
        <position position="285"/>
    </location>
</feature>
<dbReference type="EC" id="1.2.1.8" evidence="1"/>
<dbReference type="EMBL" id="BX571966">
    <property type="protein sequence ID" value="CAH38825.1"/>
    <property type="molecule type" value="Genomic_DNA"/>
</dbReference>
<dbReference type="RefSeq" id="WP_004533333.1">
    <property type="nucleotide sequence ID" value="NC_006351.1"/>
</dbReference>
<dbReference type="RefSeq" id="YP_111364.1">
    <property type="nucleotide sequence ID" value="NC_006351.1"/>
</dbReference>
<dbReference type="SMR" id="Q63KK8"/>
<dbReference type="STRING" id="272560.BPSS1354"/>
<dbReference type="GeneID" id="93063522"/>
<dbReference type="KEGG" id="bps:BPSS1354"/>
<dbReference type="PATRIC" id="fig|272560.51.peg.4658"/>
<dbReference type="eggNOG" id="COG1012">
    <property type="taxonomic scope" value="Bacteria"/>
</dbReference>
<dbReference type="UniPathway" id="UPA00529">
    <property type="reaction ID" value="UER00386"/>
</dbReference>
<dbReference type="Proteomes" id="UP000000605">
    <property type="component" value="Chromosome 2"/>
</dbReference>
<dbReference type="GO" id="GO:0008802">
    <property type="term" value="F:betaine-aldehyde dehydrogenase (NAD+) activity"/>
    <property type="evidence" value="ECO:0007669"/>
    <property type="project" value="UniProtKB-UniRule"/>
</dbReference>
<dbReference type="GO" id="GO:0046872">
    <property type="term" value="F:metal ion binding"/>
    <property type="evidence" value="ECO:0007669"/>
    <property type="project" value="UniProtKB-KW"/>
</dbReference>
<dbReference type="GO" id="GO:0019285">
    <property type="term" value="P:glycine betaine biosynthetic process from choline"/>
    <property type="evidence" value="ECO:0007669"/>
    <property type="project" value="UniProtKB-UniRule"/>
</dbReference>
<dbReference type="CDD" id="cd07090">
    <property type="entry name" value="ALDH_F9_TMBADH"/>
    <property type="match status" value="1"/>
</dbReference>
<dbReference type="FunFam" id="3.40.309.10:FF:000014">
    <property type="entry name" value="NAD/NADP-dependent betaine aldehyde dehydrogenase"/>
    <property type="match status" value="1"/>
</dbReference>
<dbReference type="FunFam" id="3.40.605.10:FF:000007">
    <property type="entry name" value="NAD/NADP-dependent betaine aldehyde dehydrogenase"/>
    <property type="match status" value="1"/>
</dbReference>
<dbReference type="Gene3D" id="3.40.605.10">
    <property type="entry name" value="Aldehyde Dehydrogenase, Chain A, domain 1"/>
    <property type="match status" value="1"/>
</dbReference>
<dbReference type="Gene3D" id="3.40.309.10">
    <property type="entry name" value="Aldehyde Dehydrogenase, Chain A, domain 2"/>
    <property type="match status" value="1"/>
</dbReference>
<dbReference type="HAMAP" id="MF_00804">
    <property type="entry name" value="BADH"/>
    <property type="match status" value="1"/>
</dbReference>
<dbReference type="InterPro" id="IPR016161">
    <property type="entry name" value="Ald_DH/histidinol_DH"/>
</dbReference>
<dbReference type="InterPro" id="IPR016163">
    <property type="entry name" value="Ald_DH_C"/>
</dbReference>
<dbReference type="InterPro" id="IPR016160">
    <property type="entry name" value="Ald_DH_CS_CYS"/>
</dbReference>
<dbReference type="InterPro" id="IPR029510">
    <property type="entry name" value="Ald_DH_CS_GLU"/>
</dbReference>
<dbReference type="InterPro" id="IPR016162">
    <property type="entry name" value="Ald_DH_N"/>
</dbReference>
<dbReference type="InterPro" id="IPR015590">
    <property type="entry name" value="Aldehyde_DH_dom"/>
</dbReference>
<dbReference type="InterPro" id="IPR011264">
    <property type="entry name" value="BADH"/>
</dbReference>
<dbReference type="NCBIfam" id="TIGR01804">
    <property type="entry name" value="BADH"/>
    <property type="match status" value="1"/>
</dbReference>
<dbReference type="NCBIfam" id="NF009725">
    <property type="entry name" value="PRK13252.1"/>
    <property type="match status" value="1"/>
</dbReference>
<dbReference type="PANTHER" id="PTHR11699">
    <property type="entry name" value="ALDEHYDE DEHYDROGENASE-RELATED"/>
    <property type="match status" value="1"/>
</dbReference>
<dbReference type="Pfam" id="PF00171">
    <property type="entry name" value="Aldedh"/>
    <property type="match status" value="1"/>
</dbReference>
<dbReference type="SUPFAM" id="SSF53720">
    <property type="entry name" value="ALDH-like"/>
    <property type="match status" value="1"/>
</dbReference>
<dbReference type="PROSITE" id="PS00070">
    <property type="entry name" value="ALDEHYDE_DEHYDR_CYS"/>
    <property type="match status" value="1"/>
</dbReference>
<dbReference type="PROSITE" id="PS00687">
    <property type="entry name" value="ALDEHYDE_DEHYDR_GLU"/>
    <property type="match status" value="1"/>
</dbReference>
<protein>
    <recommendedName>
        <fullName evidence="1">Betaine aldehyde dehydrogenase</fullName>
        <shortName evidence="1">BADH</shortName>
        <ecNumber evidence="1">1.2.1.8</ecNumber>
    </recommendedName>
</protein>
<gene>
    <name evidence="1" type="primary">betB</name>
    <name type="ordered locus">BPSS1354</name>
</gene>